<organism>
    <name type="scientific">Erythrobacter litoralis (strain HTCC2594)</name>
    <dbReference type="NCBI Taxonomy" id="314225"/>
    <lineage>
        <taxon>Bacteria</taxon>
        <taxon>Pseudomonadati</taxon>
        <taxon>Pseudomonadota</taxon>
        <taxon>Alphaproteobacteria</taxon>
        <taxon>Sphingomonadales</taxon>
        <taxon>Erythrobacteraceae</taxon>
        <taxon>Erythrobacter/Porphyrobacter group</taxon>
        <taxon>Erythrobacter</taxon>
    </lineage>
</organism>
<dbReference type="EC" id="1.11.1.21" evidence="1"/>
<dbReference type="EMBL" id="CP000157">
    <property type="protein sequence ID" value="ABC64185.1"/>
    <property type="molecule type" value="Genomic_DNA"/>
</dbReference>
<dbReference type="SMR" id="Q2N806"/>
<dbReference type="STRING" id="314225.ELI_10465"/>
<dbReference type="PeroxiBase" id="2517">
    <property type="entry name" value="ElCP01"/>
</dbReference>
<dbReference type="KEGG" id="eli:ELI_10465"/>
<dbReference type="eggNOG" id="COG0376">
    <property type="taxonomic scope" value="Bacteria"/>
</dbReference>
<dbReference type="HOGENOM" id="CLU_025424_2_0_5"/>
<dbReference type="Proteomes" id="UP000008808">
    <property type="component" value="Chromosome"/>
</dbReference>
<dbReference type="GO" id="GO:0005829">
    <property type="term" value="C:cytosol"/>
    <property type="evidence" value="ECO:0007669"/>
    <property type="project" value="TreeGrafter"/>
</dbReference>
<dbReference type="GO" id="GO:0004096">
    <property type="term" value="F:catalase activity"/>
    <property type="evidence" value="ECO:0007669"/>
    <property type="project" value="UniProtKB-UniRule"/>
</dbReference>
<dbReference type="GO" id="GO:0020037">
    <property type="term" value="F:heme binding"/>
    <property type="evidence" value="ECO:0007669"/>
    <property type="project" value="InterPro"/>
</dbReference>
<dbReference type="GO" id="GO:0046872">
    <property type="term" value="F:metal ion binding"/>
    <property type="evidence" value="ECO:0007669"/>
    <property type="project" value="UniProtKB-KW"/>
</dbReference>
<dbReference type="GO" id="GO:0070301">
    <property type="term" value="P:cellular response to hydrogen peroxide"/>
    <property type="evidence" value="ECO:0007669"/>
    <property type="project" value="TreeGrafter"/>
</dbReference>
<dbReference type="GO" id="GO:0042744">
    <property type="term" value="P:hydrogen peroxide catabolic process"/>
    <property type="evidence" value="ECO:0007669"/>
    <property type="project" value="UniProtKB-KW"/>
</dbReference>
<dbReference type="CDD" id="cd08200">
    <property type="entry name" value="catalase_peroxidase_2"/>
    <property type="match status" value="1"/>
</dbReference>
<dbReference type="FunFam" id="1.10.420.10:FF:000004">
    <property type="entry name" value="Catalase-peroxidase"/>
    <property type="match status" value="1"/>
</dbReference>
<dbReference type="FunFam" id="1.10.520.10:FF:000002">
    <property type="entry name" value="Catalase-peroxidase"/>
    <property type="match status" value="1"/>
</dbReference>
<dbReference type="Gene3D" id="1.10.520.10">
    <property type="match status" value="2"/>
</dbReference>
<dbReference type="Gene3D" id="1.10.420.10">
    <property type="entry name" value="Peroxidase, domain 2"/>
    <property type="match status" value="2"/>
</dbReference>
<dbReference type="HAMAP" id="MF_01961">
    <property type="entry name" value="Catal_peroxid"/>
    <property type="match status" value="1"/>
</dbReference>
<dbReference type="InterPro" id="IPR000763">
    <property type="entry name" value="Catalase_peroxidase"/>
</dbReference>
<dbReference type="InterPro" id="IPR002016">
    <property type="entry name" value="Haem_peroxidase"/>
</dbReference>
<dbReference type="InterPro" id="IPR010255">
    <property type="entry name" value="Haem_peroxidase_sf"/>
</dbReference>
<dbReference type="InterPro" id="IPR019794">
    <property type="entry name" value="Peroxidases_AS"/>
</dbReference>
<dbReference type="NCBIfam" id="TIGR00198">
    <property type="entry name" value="cat_per_HPI"/>
    <property type="match status" value="1"/>
</dbReference>
<dbReference type="NCBIfam" id="NF011635">
    <property type="entry name" value="PRK15061.1"/>
    <property type="match status" value="1"/>
</dbReference>
<dbReference type="PANTHER" id="PTHR30555:SF0">
    <property type="entry name" value="CATALASE-PEROXIDASE"/>
    <property type="match status" value="1"/>
</dbReference>
<dbReference type="PANTHER" id="PTHR30555">
    <property type="entry name" value="HYDROPEROXIDASE I, BIFUNCTIONAL CATALASE-PEROXIDASE"/>
    <property type="match status" value="1"/>
</dbReference>
<dbReference type="Pfam" id="PF00141">
    <property type="entry name" value="peroxidase"/>
    <property type="match status" value="2"/>
</dbReference>
<dbReference type="PRINTS" id="PR00460">
    <property type="entry name" value="BPEROXIDASE"/>
</dbReference>
<dbReference type="PRINTS" id="PR00458">
    <property type="entry name" value="PEROXIDASE"/>
</dbReference>
<dbReference type="SUPFAM" id="SSF48113">
    <property type="entry name" value="Heme-dependent peroxidases"/>
    <property type="match status" value="2"/>
</dbReference>
<dbReference type="PROSITE" id="PS00436">
    <property type="entry name" value="PEROXIDASE_2"/>
    <property type="match status" value="1"/>
</dbReference>
<dbReference type="PROSITE" id="PS50873">
    <property type="entry name" value="PEROXIDASE_4"/>
    <property type="match status" value="1"/>
</dbReference>
<proteinExistence type="inferred from homology"/>
<sequence length="740" mass="81710">MQMDAKTGDISGGCPFHGDGGTRSLLGRTNRDWWPDQLQLEILKEGGRNPDPMGEDFDYVEAFNAIDYTALKQDLTDLMTDSQEWWPADYGHYGPFFIRMAWHAAGTYRTGDGRGGSSSGQQRFAPLNSWPDNGNLDKARRLLWPIKQKYGKHISWADLFILTGNVAIESMGGPVFGFGGGRKDVYEPEMVYWGTEEQWVDTGAETRIHPDEGRALENPLAAIQMGLIYVNPEGPGGDPHDPEGMARDMRETFARMAMNDEETVALTAGGHAFGKCHGAKPADTFGTAPEGENLHLMGMGWLTDEEEIRNGHVTTSGIEGPWTPNPTQWGNDYFRLLFKYEYELTQSPAGAYQWTPVDPEEADMAPDARDPSKKVPTIMTTADMALKRDPDYRKISERFRDDQAALDDAFARAWFKLCHRDMGPKVRYQGPEVPSEDLIWQDPVPSGTAPSDSDVSSFKSAVLDSGLTVSELVKAAWASASTYRNSDHRGGANGARVRLAPQKDWAANDPEELGKVLSKLDELRGNLSMADAIVLAGSAAIEKAARDAGHSVSVDVTTGRGDATDEHTDAESFEPLEPFADGFRNYLKTKASVKTEEMLIDKAHLLGLSIPEMTALVGGMRALGAVSRHADHGDRIGVLTDRPGQLTNDFFVNLLDMGTKWEVVDESGDEEFVGKDRKSGDEKWRATRTDLVFGSNSQLRAQAEVFAESGNEQLFLDTFVKAWTKVMDADRFDVTYAKYN</sequence>
<evidence type="ECO:0000255" key="1">
    <source>
        <dbReference type="HAMAP-Rule" id="MF_01961"/>
    </source>
</evidence>
<evidence type="ECO:0000256" key="2">
    <source>
        <dbReference type="SAM" id="MobiDB-lite"/>
    </source>
</evidence>
<reference key="1">
    <citation type="journal article" date="2009" name="J. Bacteriol.">
        <title>Complete genome sequence of Erythrobacter litoralis HTCC2594.</title>
        <authorList>
            <person name="Oh H.M."/>
            <person name="Giovannoni S.J."/>
            <person name="Ferriera S."/>
            <person name="Johnson J."/>
            <person name="Cho J.C."/>
        </authorList>
    </citation>
    <scope>NUCLEOTIDE SEQUENCE [LARGE SCALE GENOMIC DNA]</scope>
    <source>
        <strain>HTCC2594</strain>
    </source>
</reference>
<protein>
    <recommendedName>
        <fullName evidence="1">Catalase-peroxidase</fullName>
        <shortName evidence="1">CP</shortName>
        <ecNumber evidence="1">1.11.1.21</ecNumber>
    </recommendedName>
    <alternativeName>
        <fullName evidence="1">Peroxidase/catalase</fullName>
    </alternativeName>
</protein>
<keyword id="KW-0349">Heme</keyword>
<keyword id="KW-0376">Hydrogen peroxide</keyword>
<keyword id="KW-0408">Iron</keyword>
<keyword id="KW-0479">Metal-binding</keyword>
<keyword id="KW-0560">Oxidoreductase</keyword>
<keyword id="KW-0575">Peroxidase</keyword>
<keyword id="KW-1185">Reference proteome</keyword>
<name>KATG_ERYLH</name>
<comment type="function">
    <text evidence="1">Bifunctional enzyme with both catalase and broad-spectrum peroxidase activity.</text>
</comment>
<comment type="catalytic activity">
    <reaction evidence="1">
        <text>H2O2 + AH2 = A + 2 H2O</text>
        <dbReference type="Rhea" id="RHEA:30275"/>
        <dbReference type="ChEBI" id="CHEBI:13193"/>
        <dbReference type="ChEBI" id="CHEBI:15377"/>
        <dbReference type="ChEBI" id="CHEBI:16240"/>
        <dbReference type="ChEBI" id="CHEBI:17499"/>
        <dbReference type="EC" id="1.11.1.21"/>
    </reaction>
</comment>
<comment type="catalytic activity">
    <reaction evidence="1">
        <text>2 H2O2 = O2 + 2 H2O</text>
        <dbReference type="Rhea" id="RHEA:20309"/>
        <dbReference type="ChEBI" id="CHEBI:15377"/>
        <dbReference type="ChEBI" id="CHEBI:15379"/>
        <dbReference type="ChEBI" id="CHEBI:16240"/>
        <dbReference type="EC" id="1.11.1.21"/>
    </reaction>
</comment>
<comment type="cofactor">
    <cofactor evidence="1">
        <name>heme b</name>
        <dbReference type="ChEBI" id="CHEBI:60344"/>
    </cofactor>
    <text evidence="1">Binds 1 heme b (iron(II)-protoporphyrin IX) group per dimer.</text>
</comment>
<comment type="subunit">
    <text evidence="1">Homodimer or homotetramer.</text>
</comment>
<comment type="PTM">
    <text evidence="1">Formation of the three residue Trp-Tyr-Met cross-link is important for the catalase, but not the peroxidase activity of the enzyme.</text>
</comment>
<comment type="similarity">
    <text evidence="1">Belongs to the peroxidase family. Peroxidase/catalase subfamily.</text>
</comment>
<accession>Q2N806</accession>
<feature type="chain" id="PRO_0000354775" description="Catalase-peroxidase">
    <location>
        <begin position="1"/>
        <end position="740"/>
    </location>
</feature>
<feature type="region of interest" description="Disordered" evidence="2">
    <location>
        <begin position="111"/>
        <end position="130"/>
    </location>
</feature>
<feature type="active site" description="Proton acceptor" evidence="1">
    <location>
        <position position="103"/>
    </location>
</feature>
<feature type="binding site" description="axial binding residue" evidence="1">
    <location>
        <position position="271"/>
    </location>
    <ligand>
        <name>heme b</name>
        <dbReference type="ChEBI" id="CHEBI:60344"/>
    </ligand>
    <ligandPart>
        <name>Fe</name>
        <dbReference type="ChEBI" id="CHEBI:18248"/>
    </ligandPart>
</feature>
<feature type="site" description="Transition state stabilizer" evidence="1">
    <location>
        <position position="99"/>
    </location>
</feature>
<feature type="cross-link" description="Tryptophyl-tyrosyl-methioninium (Trp-Tyr) (with M-256)" evidence="1">
    <location>
        <begin position="102"/>
        <end position="229"/>
    </location>
</feature>
<feature type="cross-link" description="Tryptophyl-tyrosyl-methioninium (Tyr-Met) (with W-102)" evidence="1">
    <location>
        <begin position="229"/>
        <end position="256"/>
    </location>
</feature>
<gene>
    <name evidence="1" type="primary">katG</name>
    <name type="ordered locus">ELI_10465</name>
</gene>